<protein>
    <recommendedName>
        <fullName evidence="1">Pyrokinin-5</fullName>
    </recommendedName>
    <alternativeName>
        <fullName evidence="4">EubSp-Capa-PK</fullName>
    </alternativeName>
    <alternativeName>
        <fullName evidence="1">FXPRL-amide</fullName>
    </alternativeName>
</protein>
<reference evidence="5" key="1">
    <citation type="journal article" date="2009" name="BMC Evol. Biol.">
        <title>A proteomic approach for studying insect phylogeny: CAPA peptides of ancient insect taxa (Dictyoptera, Blattoptera) as a test case.</title>
        <authorList>
            <person name="Roth S."/>
            <person name="Fromm B."/>
            <person name="Gaede G."/>
            <person name="Predel R."/>
        </authorList>
    </citation>
    <scope>PROTEIN SEQUENCE</scope>
    <scope>AMIDATION AT LEU-17</scope>
    <source>
        <tissue evidence="3">Abdominal perisympathetic organs</tissue>
    </source>
</reference>
<proteinExistence type="evidence at protein level"/>
<sequence length="17" mass="1837">AGESSNEAKGMWFGPRL</sequence>
<dbReference type="GO" id="GO:0005576">
    <property type="term" value="C:extracellular region"/>
    <property type="evidence" value="ECO:0007669"/>
    <property type="project" value="UniProtKB-SubCell"/>
</dbReference>
<dbReference type="GO" id="GO:0005184">
    <property type="term" value="F:neuropeptide hormone activity"/>
    <property type="evidence" value="ECO:0007669"/>
    <property type="project" value="InterPro"/>
</dbReference>
<dbReference type="GO" id="GO:0007218">
    <property type="term" value="P:neuropeptide signaling pathway"/>
    <property type="evidence" value="ECO:0007669"/>
    <property type="project" value="UniProtKB-KW"/>
</dbReference>
<dbReference type="InterPro" id="IPR001484">
    <property type="entry name" value="Pyrokinin_CS"/>
</dbReference>
<dbReference type="PROSITE" id="PS00539">
    <property type="entry name" value="PYROKININ"/>
    <property type="match status" value="1"/>
</dbReference>
<keyword id="KW-0027">Amidation</keyword>
<keyword id="KW-0903">Direct protein sequencing</keyword>
<keyword id="KW-0527">Neuropeptide</keyword>
<keyword id="KW-0964">Secreted</keyword>
<organism>
    <name type="scientific">Eublaberus sp. (strain BF-2008)</name>
    <name type="common">Cockroach</name>
    <dbReference type="NCBI Taxonomy" id="521510"/>
    <lineage>
        <taxon>Eukaryota</taxon>
        <taxon>Metazoa</taxon>
        <taxon>Ecdysozoa</taxon>
        <taxon>Arthropoda</taxon>
        <taxon>Hexapoda</taxon>
        <taxon>Insecta</taxon>
        <taxon>Pterygota</taxon>
        <taxon>Neoptera</taxon>
        <taxon>Polyneoptera</taxon>
        <taxon>Dictyoptera</taxon>
        <taxon>Blattodea</taxon>
        <taxon>Blaberoidea</taxon>
        <taxon>Blaberidae</taxon>
        <taxon>Blaberinae</taxon>
        <taxon>Eublaberus</taxon>
    </lineage>
</organism>
<comment type="function">
    <text evidence="1">Myoactive.</text>
</comment>
<comment type="subcellular location">
    <subcellularLocation>
        <location evidence="5">Secreted</location>
    </subcellularLocation>
</comment>
<comment type="similarity">
    <text evidence="2">Belongs to the pyrokinin family.</text>
</comment>
<evidence type="ECO:0000250" key="1">
    <source>
        <dbReference type="UniProtKB" id="P82617"/>
    </source>
</evidence>
<evidence type="ECO:0000255" key="2"/>
<evidence type="ECO:0000269" key="3">
    <source>
    </source>
</evidence>
<evidence type="ECO:0000303" key="4">
    <source>
    </source>
</evidence>
<evidence type="ECO:0000305" key="5"/>
<accession>P85629</accession>
<name>PPK5_EUBSB</name>
<feature type="peptide" id="PRO_0000378693" description="Pyrokinin-5" evidence="3">
    <location>
        <begin position="1"/>
        <end position="17"/>
    </location>
</feature>
<feature type="modified residue" description="Leucine amide" evidence="3">
    <location>
        <position position="17"/>
    </location>
</feature>